<protein>
    <recommendedName>
        <fullName evidence="4">Nacrein-like protein</fullName>
    </recommendedName>
</protein>
<sequence>RGPKNWCKVHPCWTTCGSQMRQSPININTNQTIYKRYPRLKVENVHKRVIATIRNNGHAPYFEVHEKFDDEIVLRNVPERPRRKEYNFAQLHVQLGRDEKEGSEHSIDNKFKPMEAQMVFYDKDYEDVLEAKSKKNGLVVISVMIEVYGRSKEHDDCACDGETCTVRYVRKLSKLMEKYYEKVRRYPLVSINPHFLTFIKLPRKCWYNKCGRTPSPDFIEKKCEKEEPETRPFFVFEGITPLDVIPYDTNRFYTYAGSLTSPPCYETVQWVVFKCPIKVSSKAFRMLQLVQDSHLDPLEKLGVRRPLQTNKNVIVYRNHLK</sequence>
<keyword id="KW-0903">Direct protein sequencing</keyword>
<keyword id="KW-0964">Secreted</keyword>
<dbReference type="EMBL" id="GE749008">
    <property type="status" value="NOT_ANNOTATED_CDS"/>
    <property type="molecule type" value="mRNA"/>
</dbReference>
<dbReference type="EMBL" id="GE751262">
    <property type="status" value="NOT_ANNOTATED_CDS"/>
    <property type="molecule type" value="mRNA"/>
</dbReference>
<dbReference type="SMR" id="P86856"/>
<dbReference type="GO" id="GO:0005576">
    <property type="term" value="C:extracellular region"/>
    <property type="evidence" value="ECO:0007669"/>
    <property type="project" value="UniProtKB-SubCell"/>
</dbReference>
<dbReference type="GO" id="GO:0004089">
    <property type="term" value="F:carbonate dehydratase activity"/>
    <property type="evidence" value="ECO:0007669"/>
    <property type="project" value="InterPro"/>
</dbReference>
<dbReference type="GO" id="GO:0008270">
    <property type="term" value="F:zinc ion binding"/>
    <property type="evidence" value="ECO:0007669"/>
    <property type="project" value="InterPro"/>
</dbReference>
<dbReference type="GO" id="GO:0006730">
    <property type="term" value="P:one-carbon metabolic process"/>
    <property type="evidence" value="ECO:0007669"/>
    <property type="project" value="TreeGrafter"/>
</dbReference>
<dbReference type="CDD" id="cd00326">
    <property type="entry name" value="alpha_CA"/>
    <property type="match status" value="1"/>
</dbReference>
<dbReference type="Gene3D" id="3.10.200.10">
    <property type="entry name" value="Alpha carbonic anhydrase"/>
    <property type="match status" value="1"/>
</dbReference>
<dbReference type="InterPro" id="IPR001148">
    <property type="entry name" value="CA_dom"/>
</dbReference>
<dbReference type="InterPro" id="IPR036398">
    <property type="entry name" value="CA_dom_sf"/>
</dbReference>
<dbReference type="InterPro" id="IPR023561">
    <property type="entry name" value="Carbonic_anhydrase_a-class"/>
</dbReference>
<dbReference type="PANTHER" id="PTHR18952">
    <property type="entry name" value="CARBONIC ANHYDRASE"/>
    <property type="match status" value="1"/>
</dbReference>
<dbReference type="PANTHER" id="PTHR18952:SF208">
    <property type="entry name" value="CARBONIC ANHYDRASE XA-RELATED"/>
    <property type="match status" value="1"/>
</dbReference>
<dbReference type="Pfam" id="PF00194">
    <property type="entry name" value="Carb_anhydrase"/>
    <property type="match status" value="2"/>
</dbReference>
<dbReference type="SMART" id="SM01057">
    <property type="entry name" value="Carb_anhydrase"/>
    <property type="match status" value="1"/>
</dbReference>
<dbReference type="SUPFAM" id="SSF51069">
    <property type="entry name" value="Carbonic anhydrase"/>
    <property type="match status" value="1"/>
</dbReference>
<dbReference type="PROSITE" id="PS51144">
    <property type="entry name" value="ALPHA_CA_2"/>
    <property type="match status" value="1"/>
</dbReference>
<comment type="subcellular location">
    <subcellularLocation>
        <location evidence="3">Secreted</location>
    </subcellularLocation>
</comment>
<comment type="tissue specificity">
    <text evidence="3">Component of the organic matrix of calcified shell layers like nacre and prisms.</text>
</comment>
<comment type="similarity">
    <text evidence="1">Belongs to the alpha-carbonic anhydrase family.</text>
</comment>
<proteinExistence type="evidence at protein level"/>
<organism>
    <name type="scientific">Mytilus californianus</name>
    <name type="common">California mussel</name>
    <dbReference type="NCBI Taxonomy" id="6549"/>
    <lineage>
        <taxon>Eukaryota</taxon>
        <taxon>Metazoa</taxon>
        <taxon>Spiralia</taxon>
        <taxon>Lophotrochozoa</taxon>
        <taxon>Mollusca</taxon>
        <taxon>Bivalvia</taxon>
        <taxon>Autobranchia</taxon>
        <taxon>Pteriomorphia</taxon>
        <taxon>Mytilida</taxon>
        <taxon>Mytiloidea</taxon>
        <taxon>Mytilidae</taxon>
        <taxon>Mytilinae</taxon>
        <taxon>Mytilus</taxon>
    </lineage>
</organism>
<evidence type="ECO:0000255" key="1"/>
<evidence type="ECO:0000255" key="2">
    <source>
        <dbReference type="PROSITE-ProRule" id="PRU01134"/>
    </source>
</evidence>
<evidence type="ECO:0000269" key="3">
    <source>
    </source>
</evidence>
<evidence type="ECO:0000303" key="4">
    <source>
    </source>
</evidence>
<evidence type="ECO:0000305" key="5"/>
<feature type="chain" id="PRO_0000404087" description="Nacrein-like protein">
    <location>
        <begin position="1" status="less than"/>
        <end position="321"/>
    </location>
</feature>
<feature type="domain" description="Alpha-carbonic anhydrase" evidence="2">
    <location>
        <begin position="1"/>
        <end position="319"/>
    </location>
</feature>
<feature type="active site" description="Proton acceptor" evidence="2">
    <location>
        <position position="58"/>
    </location>
</feature>
<feature type="non-terminal residue" evidence="4">
    <location>
        <position position="1"/>
    </location>
</feature>
<reference evidence="5" key="1">
    <citation type="submission" date="2008-12" db="EMBL/GenBank/DDBJ databases">
        <title>Expressed sequence tags from Mytilus californianus.</title>
        <authorList>
            <person name="Gracey A."/>
            <person name="Grimwood J."/>
            <person name="Schmutz J."/>
            <person name="Myers R.M."/>
        </authorList>
    </citation>
    <scope>NUCLEOTIDE SEQUENCE [MRNA]</scope>
</reference>
<reference evidence="5" key="2">
    <citation type="journal article" date="2011" name="J. Mol. Evol.">
        <title>Molecular evolution of mollusc shell proteins: insights from proteomic analysis of the edible mussel mytilus.</title>
        <authorList>
            <person name="Marie B."/>
            <person name="Le Roy N."/>
            <person name="Zanella-Cleon I."/>
            <person name="Becchi M."/>
            <person name="Marin F."/>
        </authorList>
    </citation>
    <scope>PROTEIN SEQUENCE OF 68-82; 98-110; 213-221 AND 286-300</scope>
    <scope>SUBCELLULAR LOCATION</scope>
    <scope>TISSUE SPECIFICITY</scope>
    <source>
        <tissue evidence="3">Shell</tissue>
    </source>
</reference>
<accession>P86856</accession>
<name>MANL_MYTCA</name>